<organism>
    <name type="scientific">Bacillus licheniformis (strain ATCC 14580 / DSM 13 / JCM 2505 / CCUG 7422 / NBRC 12200 / NCIMB 9375 / NCTC 10341 / NRRL NRS-1264 / Gibson 46)</name>
    <dbReference type="NCBI Taxonomy" id="279010"/>
    <lineage>
        <taxon>Bacteria</taxon>
        <taxon>Bacillati</taxon>
        <taxon>Bacillota</taxon>
        <taxon>Bacilli</taxon>
        <taxon>Bacillales</taxon>
        <taxon>Bacillaceae</taxon>
        <taxon>Bacillus</taxon>
    </lineage>
</organism>
<feature type="chain" id="PRO_0000109638" description="Glutamate 5-kinase 1">
    <location>
        <begin position="1"/>
        <end position="365"/>
    </location>
</feature>
<feature type="domain" description="PUA" evidence="1">
    <location>
        <begin position="276"/>
        <end position="353"/>
    </location>
</feature>
<feature type="binding site" evidence="1">
    <location>
        <position position="9"/>
    </location>
    <ligand>
        <name>ATP</name>
        <dbReference type="ChEBI" id="CHEBI:30616"/>
    </ligand>
</feature>
<feature type="binding site" evidence="1">
    <location>
        <position position="49"/>
    </location>
    <ligand>
        <name>substrate</name>
    </ligand>
</feature>
<feature type="binding site" evidence="1">
    <location>
        <position position="136"/>
    </location>
    <ligand>
        <name>substrate</name>
    </ligand>
</feature>
<feature type="binding site" evidence="1">
    <location>
        <position position="148"/>
    </location>
    <ligand>
        <name>substrate</name>
    </ligand>
</feature>
<feature type="binding site" evidence="1">
    <location>
        <begin position="168"/>
        <end position="169"/>
    </location>
    <ligand>
        <name>ATP</name>
        <dbReference type="ChEBI" id="CHEBI:30616"/>
    </ligand>
</feature>
<feature type="binding site" evidence="1">
    <location>
        <begin position="210"/>
        <end position="216"/>
    </location>
    <ligand>
        <name>ATP</name>
        <dbReference type="ChEBI" id="CHEBI:30616"/>
    </ligand>
</feature>
<sequence length="365" mass="39114">MKKQRIVIKIGSSSLTNSKGSIDEEKINDHVRAIAALKKEGHEVIFISSGAVAAGFLQLGYPARPVTLKGKQAAAAVGQSLLMQTYIEHFADHDIKPAQILLTRNDFAKRERYRNAYATVMELIERGLVPIINENDSVSVEELTFGDNDMLSALVSGLIHADKLIILTDINGLYDSNPAEHPDARRFDYIPEITDELLGCAASAGSKVGTGGMKSKLLAAKTALSLGVNVFIGAGEGDDKLIQILKGNGDGTYIGQSDLSSVNNHRQWIAFHSPVSGKITVDEGAELAITENGGSLLPAGVTAISGDFPKGAVVEVYGPNGLAGKGQTLYSAAELEEVKGKRSDEFHHEEGIEVIHRNDWVSIKE</sequence>
<gene>
    <name evidence="1" type="primary">proB1</name>
    <name type="ordered locus">BLi01412</name>
    <name type="ordered locus">BL03752</name>
</gene>
<evidence type="ECO:0000255" key="1">
    <source>
        <dbReference type="HAMAP-Rule" id="MF_00456"/>
    </source>
</evidence>
<protein>
    <recommendedName>
        <fullName evidence="1">Glutamate 5-kinase 1</fullName>
        <ecNumber evidence="1">2.7.2.11</ecNumber>
    </recommendedName>
    <alternativeName>
        <fullName evidence="1">Gamma-glutamyl kinase 1</fullName>
        <shortName evidence="1">GK 1</shortName>
    </alternativeName>
</protein>
<keyword id="KW-0028">Amino-acid biosynthesis</keyword>
<keyword id="KW-0067">ATP-binding</keyword>
<keyword id="KW-0963">Cytoplasm</keyword>
<keyword id="KW-0418">Kinase</keyword>
<keyword id="KW-0547">Nucleotide-binding</keyword>
<keyword id="KW-0641">Proline biosynthesis</keyword>
<keyword id="KW-1185">Reference proteome</keyword>
<keyword id="KW-0808">Transferase</keyword>
<accession>Q65KU8</accession>
<accession>Q62W95</accession>
<dbReference type="EC" id="2.7.2.11" evidence="1"/>
<dbReference type="EMBL" id="AE017333">
    <property type="protein sequence ID" value="AAU40316.1"/>
    <property type="molecule type" value="Genomic_DNA"/>
</dbReference>
<dbReference type="EMBL" id="CP000002">
    <property type="protein sequence ID" value="AAU22963.1"/>
    <property type="molecule type" value="Genomic_DNA"/>
</dbReference>
<dbReference type="SMR" id="Q65KU8"/>
<dbReference type="STRING" id="279010.BL03752"/>
<dbReference type="KEGG" id="bld:BLi01412"/>
<dbReference type="KEGG" id="bli:BL03752"/>
<dbReference type="eggNOG" id="COG0263">
    <property type="taxonomic scope" value="Bacteria"/>
</dbReference>
<dbReference type="HOGENOM" id="CLU_025400_2_0_9"/>
<dbReference type="UniPathway" id="UPA00098">
    <property type="reaction ID" value="UER00359"/>
</dbReference>
<dbReference type="Proteomes" id="UP000000606">
    <property type="component" value="Chromosome"/>
</dbReference>
<dbReference type="GO" id="GO:0005829">
    <property type="term" value="C:cytosol"/>
    <property type="evidence" value="ECO:0007669"/>
    <property type="project" value="TreeGrafter"/>
</dbReference>
<dbReference type="GO" id="GO:0005524">
    <property type="term" value="F:ATP binding"/>
    <property type="evidence" value="ECO:0007669"/>
    <property type="project" value="UniProtKB-KW"/>
</dbReference>
<dbReference type="GO" id="GO:0004349">
    <property type="term" value="F:glutamate 5-kinase activity"/>
    <property type="evidence" value="ECO:0007669"/>
    <property type="project" value="UniProtKB-UniRule"/>
</dbReference>
<dbReference type="GO" id="GO:0003723">
    <property type="term" value="F:RNA binding"/>
    <property type="evidence" value="ECO:0007669"/>
    <property type="project" value="InterPro"/>
</dbReference>
<dbReference type="GO" id="GO:0055129">
    <property type="term" value="P:L-proline biosynthetic process"/>
    <property type="evidence" value="ECO:0007669"/>
    <property type="project" value="UniProtKB-UniRule"/>
</dbReference>
<dbReference type="CDD" id="cd04242">
    <property type="entry name" value="AAK_G5K_ProB"/>
    <property type="match status" value="1"/>
</dbReference>
<dbReference type="CDD" id="cd21157">
    <property type="entry name" value="PUA_G5K"/>
    <property type="match status" value="1"/>
</dbReference>
<dbReference type="FunFam" id="3.40.1160.10:FF:000018">
    <property type="entry name" value="Glutamate 5-kinase"/>
    <property type="match status" value="1"/>
</dbReference>
<dbReference type="Gene3D" id="3.40.1160.10">
    <property type="entry name" value="Acetylglutamate kinase-like"/>
    <property type="match status" value="1"/>
</dbReference>
<dbReference type="Gene3D" id="2.30.130.10">
    <property type="entry name" value="PUA domain"/>
    <property type="match status" value="1"/>
</dbReference>
<dbReference type="HAMAP" id="MF_00456">
    <property type="entry name" value="ProB"/>
    <property type="match status" value="1"/>
</dbReference>
<dbReference type="InterPro" id="IPR036393">
    <property type="entry name" value="AceGlu_kinase-like_sf"/>
</dbReference>
<dbReference type="InterPro" id="IPR001048">
    <property type="entry name" value="Asp/Glu/Uridylate_kinase"/>
</dbReference>
<dbReference type="InterPro" id="IPR041739">
    <property type="entry name" value="G5K_ProB"/>
</dbReference>
<dbReference type="InterPro" id="IPR001057">
    <property type="entry name" value="Glu/AcGlu_kinase"/>
</dbReference>
<dbReference type="InterPro" id="IPR011529">
    <property type="entry name" value="Glu_5kinase"/>
</dbReference>
<dbReference type="InterPro" id="IPR005715">
    <property type="entry name" value="Glu_5kinase/COase_Synthase"/>
</dbReference>
<dbReference type="InterPro" id="IPR019797">
    <property type="entry name" value="Glutamate_5-kinase_CS"/>
</dbReference>
<dbReference type="InterPro" id="IPR002478">
    <property type="entry name" value="PUA"/>
</dbReference>
<dbReference type="InterPro" id="IPR015947">
    <property type="entry name" value="PUA-like_sf"/>
</dbReference>
<dbReference type="InterPro" id="IPR036974">
    <property type="entry name" value="PUA_sf"/>
</dbReference>
<dbReference type="NCBIfam" id="TIGR01027">
    <property type="entry name" value="proB"/>
    <property type="match status" value="1"/>
</dbReference>
<dbReference type="PANTHER" id="PTHR43654">
    <property type="entry name" value="GLUTAMATE 5-KINASE"/>
    <property type="match status" value="1"/>
</dbReference>
<dbReference type="PANTHER" id="PTHR43654:SF1">
    <property type="entry name" value="ISOPENTENYL PHOSPHATE KINASE"/>
    <property type="match status" value="1"/>
</dbReference>
<dbReference type="Pfam" id="PF00696">
    <property type="entry name" value="AA_kinase"/>
    <property type="match status" value="1"/>
</dbReference>
<dbReference type="Pfam" id="PF01472">
    <property type="entry name" value="PUA"/>
    <property type="match status" value="1"/>
</dbReference>
<dbReference type="PIRSF" id="PIRSF000729">
    <property type="entry name" value="GK"/>
    <property type="match status" value="1"/>
</dbReference>
<dbReference type="PRINTS" id="PR00474">
    <property type="entry name" value="GLU5KINASE"/>
</dbReference>
<dbReference type="SMART" id="SM00359">
    <property type="entry name" value="PUA"/>
    <property type="match status" value="1"/>
</dbReference>
<dbReference type="SUPFAM" id="SSF53633">
    <property type="entry name" value="Carbamate kinase-like"/>
    <property type="match status" value="1"/>
</dbReference>
<dbReference type="SUPFAM" id="SSF88697">
    <property type="entry name" value="PUA domain-like"/>
    <property type="match status" value="1"/>
</dbReference>
<dbReference type="PROSITE" id="PS00902">
    <property type="entry name" value="GLUTAMATE_5_KINASE"/>
    <property type="match status" value="1"/>
</dbReference>
<dbReference type="PROSITE" id="PS50890">
    <property type="entry name" value="PUA"/>
    <property type="match status" value="1"/>
</dbReference>
<proteinExistence type="inferred from homology"/>
<reference key="1">
    <citation type="journal article" date="2004" name="J. Mol. Microbiol. Biotechnol.">
        <title>The complete genome sequence of Bacillus licheniformis DSM13, an organism with great industrial potential.</title>
        <authorList>
            <person name="Veith B."/>
            <person name="Herzberg C."/>
            <person name="Steckel S."/>
            <person name="Feesche J."/>
            <person name="Maurer K.H."/>
            <person name="Ehrenreich P."/>
            <person name="Baeumer S."/>
            <person name="Henne A."/>
            <person name="Liesegang H."/>
            <person name="Merkl R."/>
            <person name="Ehrenreich A."/>
            <person name="Gottschalk G."/>
        </authorList>
    </citation>
    <scope>NUCLEOTIDE SEQUENCE [LARGE SCALE GENOMIC DNA]</scope>
    <source>
        <strain>ATCC 14580 / DSM 13 / JCM 2505 / CCUG 7422 / NBRC 12200 / NCIMB 9375 / NCTC 10341 / NRRL NRS-1264 / Gibson 46</strain>
    </source>
</reference>
<reference key="2">
    <citation type="journal article" date="2004" name="Genome Biol.">
        <title>Complete genome sequence of the industrial bacterium Bacillus licheniformis and comparisons with closely related Bacillus species.</title>
        <authorList>
            <person name="Rey M.W."/>
            <person name="Ramaiya P."/>
            <person name="Nelson B.A."/>
            <person name="Brody-Karpin S.D."/>
            <person name="Zaretsky E.J."/>
            <person name="Tang M."/>
            <person name="Lopez de Leon A."/>
            <person name="Xiang H."/>
            <person name="Gusti V."/>
            <person name="Clausen I.G."/>
            <person name="Olsen P.B."/>
            <person name="Rasmussen M.D."/>
            <person name="Andersen J.T."/>
            <person name="Joergensen P.L."/>
            <person name="Larsen T.S."/>
            <person name="Sorokin A."/>
            <person name="Bolotin A."/>
            <person name="Lapidus A."/>
            <person name="Galleron N."/>
            <person name="Ehrlich S.D."/>
            <person name="Berka R.M."/>
        </authorList>
    </citation>
    <scope>NUCLEOTIDE SEQUENCE [LARGE SCALE GENOMIC DNA]</scope>
    <source>
        <strain>ATCC 14580 / DSM 13 / JCM 2505 / CCUG 7422 / NBRC 12200 / NCIMB 9375 / NCTC 10341 / NRRL NRS-1264 / Gibson 46</strain>
    </source>
</reference>
<comment type="function">
    <text evidence="1">Catalyzes the transfer of a phosphate group to glutamate to form L-glutamate 5-phosphate.</text>
</comment>
<comment type="catalytic activity">
    <reaction evidence="1">
        <text>L-glutamate + ATP = L-glutamyl 5-phosphate + ADP</text>
        <dbReference type="Rhea" id="RHEA:14877"/>
        <dbReference type="ChEBI" id="CHEBI:29985"/>
        <dbReference type="ChEBI" id="CHEBI:30616"/>
        <dbReference type="ChEBI" id="CHEBI:58274"/>
        <dbReference type="ChEBI" id="CHEBI:456216"/>
        <dbReference type="EC" id="2.7.2.11"/>
    </reaction>
</comment>
<comment type="pathway">
    <text evidence="1">Amino-acid biosynthesis; L-proline biosynthesis; L-glutamate 5-semialdehyde from L-glutamate: step 1/2.</text>
</comment>
<comment type="subcellular location">
    <subcellularLocation>
        <location evidence="1">Cytoplasm</location>
    </subcellularLocation>
</comment>
<comment type="similarity">
    <text evidence="1">Belongs to the glutamate 5-kinase family.</text>
</comment>
<name>PROB1_BACLD</name>